<organism>
    <name type="scientific">Chlamydia felis (strain Fe/C-56)</name>
    <name type="common">Chlamydophila felis</name>
    <dbReference type="NCBI Taxonomy" id="264202"/>
    <lineage>
        <taxon>Bacteria</taxon>
        <taxon>Pseudomonadati</taxon>
        <taxon>Chlamydiota</taxon>
        <taxon>Chlamydiia</taxon>
        <taxon>Chlamydiales</taxon>
        <taxon>Chlamydiaceae</taxon>
        <taxon>Chlamydia/Chlamydophila group</taxon>
        <taxon>Chlamydia</taxon>
    </lineage>
</organism>
<dbReference type="EC" id="2.7.7.6" evidence="1"/>
<dbReference type="EMBL" id="AP006861">
    <property type="protein sequence ID" value="BAE81664.1"/>
    <property type="molecule type" value="Genomic_DNA"/>
</dbReference>
<dbReference type="RefSeq" id="WP_011458439.1">
    <property type="nucleotide sequence ID" value="NC_007899.1"/>
</dbReference>
<dbReference type="SMR" id="Q252X4"/>
<dbReference type="STRING" id="264202.CF0892"/>
<dbReference type="KEGG" id="cfe:CF0892"/>
<dbReference type="eggNOG" id="COG0202">
    <property type="taxonomic scope" value="Bacteria"/>
</dbReference>
<dbReference type="HOGENOM" id="CLU_053084_0_1_0"/>
<dbReference type="OrthoDB" id="9805706at2"/>
<dbReference type="Proteomes" id="UP000001260">
    <property type="component" value="Chromosome"/>
</dbReference>
<dbReference type="GO" id="GO:0005737">
    <property type="term" value="C:cytoplasm"/>
    <property type="evidence" value="ECO:0007669"/>
    <property type="project" value="UniProtKB-ARBA"/>
</dbReference>
<dbReference type="GO" id="GO:0000428">
    <property type="term" value="C:DNA-directed RNA polymerase complex"/>
    <property type="evidence" value="ECO:0007669"/>
    <property type="project" value="UniProtKB-KW"/>
</dbReference>
<dbReference type="GO" id="GO:0003677">
    <property type="term" value="F:DNA binding"/>
    <property type="evidence" value="ECO:0007669"/>
    <property type="project" value="UniProtKB-UniRule"/>
</dbReference>
<dbReference type="GO" id="GO:0003899">
    <property type="term" value="F:DNA-directed RNA polymerase activity"/>
    <property type="evidence" value="ECO:0007669"/>
    <property type="project" value="UniProtKB-UniRule"/>
</dbReference>
<dbReference type="GO" id="GO:0046983">
    <property type="term" value="F:protein dimerization activity"/>
    <property type="evidence" value="ECO:0007669"/>
    <property type="project" value="InterPro"/>
</dbReference>
<dbReference type="GO" id="GO:0006351">
    <property type="term" value="P:DNA-templated transcription"/>
    <property type="evidence" value="ECO:0007669"/>
    <property type="project" value="UniProtKB-UniRule"/>
</dbReference>
<dbReference type="CDD" id="cd06928">
    <property type="entry name" value="RNAP_alpha_NTD"/>
    <property type="match status" value="1"/>
</dbReference>
<dbReference type="FunFam" id="1.10.150.20:FF:000078">
    <property type="entry name" value="DNA-directed RNA polymerase subunit alpha"/>
    <property type="match status" value="1"/>
</dbReference>
<dbReference type="Gene3D" id="1.10.150.20">
    <property type="entry name" value="5' to 3' exonuclease, C-terminal subdomain"/>
    <property type="match status" value="1"/>
</dbReference>
<dbReference type="Gene3D" id="2.170.120.12">
    <property type="entry name" value="DNA-directed RNA polymerase, insert domain"/>
    <property type="match status" value="1"/>
</dbReference>
<dbReference type="Gene3D" id="3.30.1360.10">
    <property type="entry name" value="RNA polymerase, RBP11-like subunit"/>
    <property type="match status" value="1"/>
</dbReference>
<dbReference type="HAMAP" id="MF_00059">
    <property type="entry name" value="RNApol_bact_RpoA"/>
    <property type="match status" value="1"/>
</dbReference>
<dbReference type="InterPro" id="IPR011262">
    <property type="entry name" value="DNA-dir_RNA_pol_insert"/>
</dbReference>
<dbReference type="InterPro" id="IPR011263">
    <property type="entry name" value="DNA-dir_RNA_pol_RpoA/D/Rpb3"/>
</dbReference>
<dbReference type="InterPro" id="IPR011773">
    <property type="entry name" value="DNA-dir_RpoA"/>
</dbReference>
<dbReference type="InterPro" id="IPR036603">
    <property type="entry name" value="RBP11-like"/>
</dbReference>
<dbReference type="InterPro" id="IPR011260">
    <property type="entry name" value="RNAP_asu_C"/>
</dbReference>
<dbReference type="InterPro" id="IPR036643">
    <property type="entry name" value="RNApol_insert_sf"/>
</dbReference>
<dbReference type="NCBIfam" id="NF003513">
    <property type="entry name" value="PRK05182.1-2"/>
    <property type="match status" value="1"/>
</dbReference>
<dbReference type="NCBIfam" id="NF003517">
    <property type="entry name" value="PRK05182.2-3"/>
    <property type="match status" value="1"/>
</dbReference>
<dbReference type="NCBIfam" id="NF003519">
    <property type="entry name" value="PRK05182.2-5"/>
    <property type="match status" value="1"/>
</dbReference>
<dbReference type="NCBIfam" id="TIGR02027">
    <property type="entry name" value="rpoA"/>
    <property type="match status" value="1"/>
</dbReference>
<dbReference type="Pfam" id="PF01000">
    <property type="entry name" value="RNA_pol_A_bac"/>
    <property type="match status" value="1"/>
</dbReference>
<dbReference type="Pfam" id="PF03118">
    <property type="entry name" value="RNA_pol_A_CTD"/>
    <property type="match status" value="1"/>
</dbReference>
<dbReference type="Pfam" id="PF01193">
    <property type="entry name" value="RNA_pol_L"/>
    <property type="match status" value="1"/>
</dbReference>
<dbReference type="SMART" id="SM00662">
    <property type="entry name" value="RPOLD"/>
    <property type="match status" value="1"/>
</dbReference>
<dbReference type="SUPFAM" id="SSF47789">
    <property type="entry name" value="C-terminal domain of RNA polymerase alpha subunit"/>
    <property type="match status" value="1"/>
</dbReference>
<dbReference type="SUPFAM" id="SSF56553">
    <property type="entry name" value="Insert subdomain of RNA polymerase alpha subunit"/>
    <property type="match status" value="1"/>
</dbReference>
<dbReference type="SUPFAM" id="SSF55257">
    <property type="entry name" value="RBP11-like subunits of RNA polymerase"/>
    <property type="match status" value="1"/>
</dbReference>
<evidence type="ECO:0000255" key="1">
    <source>
        <dbReference type="HAMAP-Rule" id="MF_00059"/>
    </source>
</evidence>
<protein>
    <recommendedName>
        <fullName evidence="1">DNA-directed RNA polymerase subunit alpha</fullName>
        <shortName evidence="1">RNAP subunit alpha</shortName>
        <ecNumber evidence="1">2.7.7.6</ecNumber>
    </recommendedName>
    <alternativeName>
        <fullName evidence="1">RNA polymerase subunit alpha</fullName>
    </alternativeName>
    <alternativeName>
        <fullName evidence="1">Transcriptase subunit alpha</fullName>
    </alternativeName>
</protein>
<sequence>MSDNSQNLLYDKFELPKSVKMMTVEGSGGSIDKHARFVAEPLERGMGHTLGNALRRALLIGLEAPAIISFSMTGVLHEYMAIEGIIEDVTNIVLNLKGALLKKYPFQDSEDGRRPQLLKSMISIDASDLAACGGQRAVTLADLLQEGGFEAVNPEHVIFTVTQPMQVEVALRVAFGRGYSTSERIILEDKGVNEIVLDAAFSPVVLVNYFVEDTRVGQDTDFDRLILYVETDGRVSPKEALAFSTQILTKHFSIFEKMDEKKIVFEEAISIEKENKDDILHKLVLGINEIELSVRSTNCLSNANIETIGELVIMPEPRLLQFRNFGKKSLCEIKNKLKEMKLELGMDLSQFGVGLDNVKEKMKWYAEKIRSKNVKG</sequence>
<accession>Q252X4</accession>
<comment type="function">
    <text evidence="1">DNA-dependent RNA polymerase catalyzes the transcription of DNA into RNA using the four ribonucleoside triphosphates as substrates.</text>
</comment>
<comment type="catalytic activity">
    <reaction evidence="1">
        <text>RNA(n) + a ribonucleoside 5'-triphosphate = RNA(n+1) + diphosphate</text>
        <dbReference type="Rhea" id="RHEA:21248"/>
        <dbReference type="Rhea" id="RHEA-COMP:14527"/>
        <dbReference type="Rhea" id="RHEA-COMP:17342"/>
        <dbReference type="ChEBI" id="CHEBI:33019"/>
        <dbReference type="ChEBI" id="CHEBI:61557"/>
        <dbReference type="ChEBI" id="CHEBI:140395"/>
        <dbReference type="EC" id="2.7.7.6"/>
    </reaction>
</comment>
<comment type="subunit">
    <text evidence="1">Homodimer. The RNAP catalytic core consists of 2 alpha, 1 beta, 1 beta' and 1 omega subunit. When a sigma factor is associated with the core the holoenzyme is formed, which can initiate transcription.</text>
</comment>
<comment type="domain">
    <text evidence="1">The N-terminal domain is essential for RNAP assembly and basal transcription, whereas the C-terminal domain is involved in interaction with transcriptional regulators and with upstream promoter elements.</text>
</comment>
<comment type="similarity">
    <text evidence="1">Belongs to the RNA polymerase alpha chain family.</text>
</comment>
<name>RPOA_CHLFF</name>
<feature type="chain" id="PRO_0000264490" description="DNA-directed RNA polymerase subunit alpha">
    <location>
        <begin position="1"/>
        <end position="376"/>
    </location>
</feature>
<feature type="region of interest" description="Alpha N-terminal domain (alpha-NTD)" evidence="1">
    <location>
        <begin position="1"/>
        <end position="259"/>
    </location>
</feature>
<feature type="region of interest" description="Alpha C-terminal domain (alpha-CTD)" evidence="1">
    <location>
        <begin position="276"/>
        <end position="376"/>
    </location>
</feature>
<proteinExistence type="inferred from homology"/>
<reference key="1">
    <citation type="journal article" date="2006" name="DNA Res.">
        <title>Genome sequence of the cat pathogen, Chlamydophila felis.</title>
        <authorList>
            <person name="Azuma Y."/>
            <person name="Hirakawa H."/>
            <person name="Yamashita A."/>
            <person name="Cai Y."/>
            <person name="Rahman M.A."/>
            <person name="Suzuki H."/>
            <person name="Mitaku S."/>
            <person name="Toh H."/>
            <person name="Goto S."/>
            <person name="Murakami T."/>
            <person name="Sugi K."/>
            <person name="Hayashi H."/>
            <person name="Fukushi H."/>
            <person name="Hattori M."/>
            <person name="Kuhara S."/>
            <person name="Shirai M."/>
        </authorList>
    </citation>
    <scope>NUCLEOTIDE SEQUENCE [LARGE SCALE GENOMIC DNA]</scope>
    <source>
        <strain>Fe/C-56</strain>
    </source>
</reference>
<keyword id="KW-0240">DNA-directed RNA polymerase</keyword>
<keyword id="KW-0548">Nucleotidyltransferase</keyword>
<keyword id="KW-0804">Transcription</keyword>
<keyword id="KW-0808">Transferase</keyword>
<gene>
    <name evidence="1" type="primary">rpoA</name>
    <name type="ordered locus">CF0892</name>
</gene>